<reference key="1">
    <citation type="submission" date="2006-05" db="EMBL/GenBank/DDBJ databases">
        <title>Complete sequence of chromosome 1 of Burkholderia cenocepacia AU 1054.</title>
        <authorList>
            <consortium name="US DOE Joint Genome Institute"/>
            <person name="Copeland A."/>
            <person name="Lucas S."/>
            <person name="Lapidus A."/>
            <person name="Barry K."/>
            <person name="Detter J.C."/>
            <person name="Glavina del Rio T."/>
            <person name="Hammon N."/>
            <person name="Israni S."/>
            <person name="Dalin E."/>
            <person name="Tice H."/>
            <person name="Pitluck S."/>
            <person name="Chain P."/>
            <person name="Malfatti S."/>
            <person name="Shin M."/>
            <person name="Vergez L."/>
            <person name="Schmutz J."/>
            <person name="Larimer F."/>
            <person name="Land M."/>
            <person name="Hauser L."/>
            <person name="Kyrpides N."/>
            <person name="Lykidis A."/>
            <person name="LiPuma J.J."/>
            <person name="Konstantinidis K."/>
            <person name="Tiedje J.M."/>
            <person name="Richardson P."/>
        </authorList>
    </citation>
    <scope>NUCLEOTIDE SEQUENCE [LARGE SCALE GENOMIC DNA]</scope>
    <source>
        <strain>AU 1054</strain>
    </source>
</reference>
<feature type="chain" id="PRO_0000257623" description="Dual-action ribosomal maturation protein DarP">
    <location>
        <begin position="1"/>
        <end position="203"/>
    </location>
</feature>
<feature type="region of interest" description="Disordered" evidence="2">
    <location>
        <begin position="1"/>
        <end position="31"/>
    </location>
</feature>
<feature type="region of interest" description="Disordered" evidence="2">
    <location>
        <begin position="182"/>
        <end position="203"/>
    </location>
</feature>
<feature type="compositionally biased region" description="Acidic residues" evidence="2">
    <location>
        <begin position="186"/>
        <end position="203"/>
    </location>
</feature>
<accession>Q1BXZ3</accession>
<evidence type="ECO:0000255" key="1">
    <source>
        <dbReference type="HAMAP-Rule" id="MF_00765"/>
    </source>
</evidence>
<evidence type="ECO:0000256" key="2">
    <source>
        <dbReference type="SAM" id="MobiDB-lite"/>
    </source>
</evidence>
<dbReference type="EMBL" id="CP000378">
    <property type="protein sequence ID" value="ABF75512.1"/>
    <property type="molecule type" value="Genomic_DNA"/>
</dbReference>
<dbReference type="SMR" id="Q1BXZ3"/>
<dbReference type="HOGENOM" id="CLU_106757_1_0_4"/>
<dbReference type="GO" id="GO:0005829">
    <property type="term" value="C:cytosol"/>
    <property type="evidence" value="ECO:0007669"/>
    <property type="project" value="TreeGrafter"/>
</dbReference>
<dbReference type="GO" id="GO:0043022">
    <property type="term" value="F:ribosome binding"/>
    <property type="evidence" value="ECO:0007669"/>
    <property type="project" value="UniProtKB-UniRule"/>
</dbReference>
<dbReference type="GO" id="GO:0019843">
    <property type="term" value="F:rRNA binding"/>
    <property type="evidence" value="ECO:0007669"/>
    <property type="project" value="UniProtKB-UniRule"/>
</dbReference>
<dbReference type="GO" id="GO:1902626">
    <property type="term" value="P:assembly of large subunit precursor of preribosome"/>
    <property type="evidence" value="ECO:0007669"/>
    <property type="project" value="UniProtKB-UniRule"/>
</dbReference>
<dbReference type="CDD" id="cd16331">
    <property type="entry name" value="YjgA-like"/>
    <property type="match status" value="1"/>
</dbReference>
<dbReference type="Gene3D" id="1.10.60.30">
    <property type="entry name" value="PSPTO4464-like domains"/>
    <property type="match status" value="2"/>
</dbReference>
<dbReference type="HAMAP" id="MF_00765">
    <property type="entry name" value="DarP"/>
    <property type="match status" value="1"/>
</dbReference>
<dbReference type="InterPro" id="IPR006839">
    <property type="entry name" value="DarP"/>
</dbReference>
<dbReference type="InterPro" id="IPR023153">
    <property type="entry name" value="DarP_sf"/>
</dbReference>
<dbReference type="NCBIfam" id="NF003593">
    <property type="entry name" value="PRK05255.1-1"/>
    <property type="match status" value="1"/>
</dbReference>
<dbReference type="PANTHER" id="PTHR38101">
    <property type="entry name" value="UPF0307 PROTEIN YJGA"/>
    <property type="match status" value="1"/>
</dbReference>
<dbReference type="PANTHER" id="PTHR38101:SF1">
    <property type="entry name" value="UPF0307 PROTEIN YJGA"/>
    <property type="match status" value="1"/>
</dbReference>
<dbReference type="Pfam" id="PF04751">
    <property type="entry name" value="DarP"/>
    <property type="match status" value="1"/>
</dbReference>
<dbReference type="PIRSF" id="PIRSF016183">
    <property type="entry name" value="UCP016183"/>
    <property type="match status" value="1"/>
</dbReference>
<dbReference type="SUPFAM" id="SSF158710">
    <property type="entry name" value="PSPTO4464-like"/>
    <property type="match status" value="1"/>
</dbReference>
<comment type="function">
    <text evidence="1">Member of a network of 50S ribosomal subunit biogenesis factors which assembles along the 30S-50S interface, preventing incorrect 23S rRNA structures from forming. Promotes peptidyl transferase center (PTC) maturation.</text>
</comment>
<comment type="subcellular location">
    <subcellularLocation>
        <location evidence="1">Cytoplasm</location>
    </subcellularLocation>
    <text evidence="1">Associates with late stage pre-50S ribosomal subunits.</text>
</comment>
<comment type="similarity">
    <text evidence="1">Belongs to the DarP family.</text>
</comment>
<name>DARP_BURO1</name>
<keyword id="KW-0963">Cytoplasm</keyword>
<keyword id="KW-0690">Ribosome biogenesis</keyword>
<keyword id="KW-0694">RNA-binding</keyword>
<keyword id="KW-0699">rRNA-binding</keyword>
<gene>
    <name evidence="1" type="primary">darP</name>
    <name type="ordered locus">Bcen_0601</name>
</gene>
<organism>
    <name type="scientific">Burkholderia orbicola (strain AU 1054)</name>
    <dbReference type="NCBI Taxonomy" id="331271"/>
    <lineage>
        <taxon>Bacteria</taxon>
        <taxon>Pseudomonadati</taxon>
        <taxon>Pseudomonadota</taxon>
        <taxon>Betaproteobacteria</taxon>
        <taxon>Burkholderiales</taxon>
        <taxon>Burkholderiaceae</taxon>
        <taxon>Burkholderia</taxon>
        <taxon>Burkholderia cepacia complex</taxon>
        <taxon>Burkholderia orbicola</taxon>
    </lineage>
</organism>
<sequence>MPPMTRKTRIQPIEPVAEEDDNGYDRPSKSQLKREMHELQVLGQALVDLPKDALKRMPMPESLGDAVREARRITDHEGKRRQLQYVGRVMRSLTDDETAALRTALDAQRGVNKAATARLHWIERTREQLLASDDALTEFLRQHPDADIQEGRTLIRNARKEAQQGKPPRYFRELFQWIKAAGGASDSDDEAADDAGDDHDDEA</sequence>
<protein>
    <recommendedName>
        <fullName evidence="1">Dual-action ribosomal maturation protein DarP</fullName>
    </recommendedName>
    <alternativeName>
        <fullName evidence="1">Large ribosomal subunit assembly factor DarP</fullName>
    </alternativeName>
</protein>
<proteinExistence type="inferred from homology"/>